<protein>
    <recommendedName>
        <fullName>THAP domain-containing protein 1 A</fullName>
    </recommendedName>
</protein>
<keyword id="KW-0131">Cell cycle</keyword>
<keyword id="KW-0175">Coiled coil</keyword>
<keyword id="KW-0238">DNA-binding</keyword>
<keyword id="KW-0479">Metal-binding</keyword>
<keyword id="KW-0539">Nucleus</keyword>
<keyword id="KW-1185">Reference proteome</keyword>
<keyword id="KW-0804">Transcription</keyword>
<keyword id="KW-0805">Transcription regulation</keyword>
<keyword id="KW-0862">Zinc</keyword>
<keyword id="KW-0863">Zinc-finger</keyword>
<accession>Q5U560</accession>
<name>THP1A_XENLA</name>
<evidence type="ECO:0000250" key="1"/>
<evidence type="ECO:0000255" key="2"/>
<evidence type="ECO:0000255" key="3">
    <source>
        <dbReference type="PROSITE-ProRule" id="PRU00309"/>
    </source>
</evidence>
<evidence type="ECO:0000305" key="4"/>
<gene>
    <name type="primary">thap1-a</name>
</gene>
<reference key="1">
    <citation type="submission" date="2004-10" db="EMBL/GenBank/DDBJ databases">
        <authorList>
            <consortium name="NIH - Xenopus Gene Collection (XGC) project"/>
        </authorList>
    </citation>
    <scope>NUCLEOTIDE SEQUENCE [LARGE SCALE MRNA]</scope>
</reference>
<comment type="function">
    <text evidence="1">DNA-binding transcription regulator that regulates endothelial cell proliferation and G1/S cell-cycle progression. Specifically binds the 5'-[AT]NTNN[GT]GGCA[AGT]-3' core DNA sequence and acts by modulating expression of pRB-E2F cell-cycle target genes (By similarity).</text>
</comment>
<comment type="subcellular location">
    <subcellularLocation>
        <location evidence="1">Nucleus</location>
        <location evidence="1">Nucleoplasm</location>
    </subcellularLocation>
</comment>
<comment type="similarity">
    <text evidence="4">Belongs to the THAP1 family.</text>
</comment>
<dbReference type="EMBL" id="BC084824">
    <property type="protein sequence ID" value="AAH84824.1"/>
    <property type="molecule type" value="mRNA"/>
</dbReference>
<dbReference type="RefSeq" id="NP_001088492.1">
    <property type="nucleotide sequence ID" value="NM_001095023.2"/>
</dbReference>
<dbReference type="SMR" id="Q5U560"/>
<dbReference type="DNASU" id="495360"/>
<dbReference type="GeneID" id="495360"/>
<dbReference type="KEGG" id="xla:495360"/>
<dbReference type="AGR" id="Xenbase:XB-GENE-1008764"/>
<dbReference type="CTD" id="495360"/>
<dbReference type="Xenbase" id="XB-GENE-1008764">
    <property type="gene designation" value="thap1.L"/>
</dbReference>
<dbReference type="OMA" id="TKDCFKR"/>
<dbReference type="OrthoDB" id="9867479at2759"/>
<dbReference type="Proteomes" id="UP000186698">
    <property type="component" value="Chromosome 1L"/>
</dbReference>
<dbReference type="Bgee" id="495360">
    <property type="expression patterns" value="Expressed in oocyte and 19 other cell types or tissues"/>
</dbReference>
<dbReference type="GO" id="GO:0005654">
    <property type="term" value="C:nucleoplasm"/>
    <property type="evidence" value="ECO:0007669"/>
    <property type="project" value="UniProtKB-SubCell"/>
</dbReference>
<dbReference type="GO" id="GO:0005634">
    <property type="term" value="C:nucleus"/>
    <property type="evidence" value="ECO:0000318"/>
    <property type="project" value="GO_Central"/>
</dbReference>
<dbReference type="GO" id="GO:0003700">
    <property type="term" value="F:DNA-binding transcription factor activity"/>
    <property type="evidence" value="ECO:0000318"/>
    <property type="project" value="GO_Central"/>
</dbReference>
<dbReference type="GO" id="GO:0000978">
    <property type="term" value="F:RNA polymerase II cis-regulatory region sequence-specific DNA binding"/>
    <property type="evidence" value="ECO:0000318"/>
    <property type="project" value="GO_Central"/>
</dbReference>
<dbReference type="GO" id="GO:0043565">
    <property type="term" value="F:sequence-specific DNA binding"/>
    <property type="evidence" value="ECO:0000250"/>
    <property type="project" value="UniProtKB"/>
</dbReference>
<dbReference type="GO" id="GO:0008270">
    <property type="term" value="F:zinc ion binding"/>
    <property type="evidence" value="ECO:0007669"/>
    <property type="project" value="UniProtKB-KW"/>
</dbReference>
<dbReference type="GO" id="GO:0006357">
    <property type="term" value="P:regulation of transcription by RNA polymerase II"/>
    <property type="evidence" value="ECO:0000318"/>
    <property type="project" value="GO_Central"/>
</dbReference>
<dbReference type="Gene3D" id="6.20.210.20">
    <property type="entry name" value="THAP domain"/>
    <property type="match status" value="1"/>
</dbReference>
<dbReference type="InterPro" id="IPR026516">
    <property type="entry name" value="THAP1/10"/>
</dbReference>
<dbReference type="InterPro" id="IPR006612">
    <property type="entry name" value="THAP_Znf"/>
</dbReference>
<dbReference type="InterPro" id="IPR038441">
    <property type="entry name" value="THAP_Znf_sf"/>
</dbReference>
<dbReference type="PANTHER" id="PTHR46600">
    <property type="entry name" value="THAP DOMAIN-CONTAINING"/>
    <property type="match status" value="1"/>
</dbReference>
<dbReference type="PANTHER" id="PTHR46600:SF1">
    <property type="entry name" value="THAP DOMAIN-CONTAINING PROTEIN 1"/>
    <property type="match status" value="1"/>
</dbReference>
<dbReference type="Pfam" id="PF05485">
    <property type="entry name" value="THAP"/>
    <property type="match status" value="1"/>
</dbReference>
<dbReference type="SMART" id="SM00692">
    <property type="entry name" value="DM3"/>
    <property type="match status" value="1"/>
</dbReference>
<dbReference type="SMART" id="SM00980">
    <property type="entry name" value="THAP"/>
    <property type="match status" value="1"/>
</dbReference>
<dbReference type="SUPFAM" id="SSF57716">
    <property type="entry name" value="Glucocorticoid receptor-like (DNA-binding domain)"/>
    <property type="match status" value="1"/>
</dbReference>
<dbReference type="PROSITE" id="PS50950">
    <property type="entry name" value="ZF_THAP"/>
    <property type="match status" value="1"/>
</dbReference>
<feature type="chain" id="PRO_0000367845" description="THAP domain-containing protein 1 A">
    <location>
        <begin position="1"/>
        <end position="225"/>
    </location>
</feature>
<feature type="zinc finger region" description="THAP-type" evidence="3">
    <location>
        <begin position="5"/>
        <end position="57"/>
    </location>
</feature>
<feature type="coiled-coil region" evidence="2">
    <location>
        <begin position="139"/>
        <end position="194"/>
    </location>
</feature>
<organism>
    <name type="scientific">Xenopus laevis</name>
    <name type="common">African clawed frog</name>
    <dbReference type="NCBI Taxonomy" id="8355"/>
    <lineage>
        <taxon>Eukaryota</taxon>
        <taxon>Metazoa</taxon>
        <taxon>Chordata</taxon>
        <taxon>Craniata</taxon>
        <taxon>Vertebrata</taxon>
        <taxon>Euteleostomi</taxon>
        <taxon>Amphibia</taxon>
        <taxon>Batrachia</taxon>
        <taxon>Anura</taxon>
        <taxon>Pipoidea</taxon>
        <taxon>Pipidae</taxon>
        <taxon>Xenopodinae</taxon>
        <taxon>Xenopus</taxon>
        <taxon>Xenopus</taxon>
    </lineage>
</organism>
<proteinExistence type="evidence at transcript level"/>
<sequence>MVQSCSAYGCKNRYDKDKPISFHKFPLKRPLLCKKWEAAVRRAEFKPTKYSSICSDHFSADCFKRECNNKLLKDNAVPTIFAHMEIKKKSGKAVKKEQLPAEPEPVPAVPEIDPAIGLLLPPLYTPSHIAVICDHNYTVEDTVHQRRRIQQLEEQVDKLRKKLKIANQKCRRQERSLEKLEREVSEYREAKGSGYVIFPGNYYEVLNENEYKELTPEITYKEIIL</sequence>